<organism>
    <name type="scientific">Archaeoglobus fulgidus (strain ATCC 49558 / DSM 4304 / JCM 9628 / NBRC 100126 / VC-16)</name>
    <dbReference type="NCBI Taxonomy" id="224325"/>
    <lineage>
        <taxon>Archaea</taxon>
        <taxon>Methanobacteriati</taxon>
        <taxon>Methanobacteriota</taxon>
        <taxon>Archaeoglobi</taxon>
        <taxon>Archaeoglobales</taxon>
        <taxon>Archaeoglobaceae</taxon>
        <taxon>Archaeoglobus</taxon>
    </lineage>
</organism>
<protein>
    <recommendedName>
        <fullName>Uncharacterized protein AF_1654</fullName>
    </recommendedName>
</protein>
<dbReference type="EMBL" id="AE000782">
    <property type="protein sequence ID" value="AAB89615.1"/>
    <property type="molecule type" value="Genomic_DNA"/>
</dbReference>
<dbReference type="PIR" id="E69456">
    <property type="entry name" value="E69456"/>
</dbReference>
<dbReference type="STRING" id="224325.AF_1654"/>
<dbReference type="PaxDb" id="224325-AF_1654"/>
<dbReference type="DNASU" id="1484877"/>
<dbReference type="EnsemblBacteria" id="AAB89615">
    <property type="protein sequence ID" value="AAB89615"/>
    <property type="gene ID" value="AF_1654"/>
</dbReference>
<dbReference type="KEGG" id="afu:AF_1654"/>
<dbReference type="eggNOG" id="arCOG04474">
    <property type="taxonomic scope" value="Archaea"/>
</dbReference>
<dbReference type="HOGENOM" id="CLU_843590_0_0_2"/>
<dbReference type="OrthoDB" id="270764at2157"/>
<dbReference type="Proteomes" id="UP000002199">
    <property type="component" value="Chromosome"/>
</dbReference>
<dbReference type="GO" id="GO:0005886">
    <property type="term" value="C:plasma membrane"/>
    <property type="evidence" value="ECO:0007669"/>
    <property type="project" value="UniProtKB-SubCell"/>
</dbReference>
<dbReference type="InterPro" id="IPR035185">
    <property type="entry name" value="DUF5305"/>
</dbReference>
<dbReference type="Pfam" id="PF17231">
    <property type="entry name" value="DUF5305"/>
    <property type="match status" value="1"/>
</dbReference>
<reference key="1">
    <citation type="journal article" date="1997" name="Nature">
        <title>The complete genome sequence of the hyperthermophilic, sulphate-reducing archaeon Archaeoglobus fulgidus.</title>
        <authorList>
            <person name="Klenk H.-P."/>
            <person name="Clayton R.A."/>
            <person name="Tomb J.-F."/>
            <person name="White O."/>
            <person name="Nelson K.E."/>
            <person name="Ketchum K.A."/>
            <person name="Dodson R.J."/>
            <person name="Gwinn M.L."/>
            <person name="Hickey E.K."/>
            <person name="Peterson J.D."/>
            <person name="Richardson D.L."/>
            <person name="Kerlavage A.R."/>
            <person name="Graham D.E."/>
            <person name="Kyrpides N.C."/>
            <person name="Fleischmann R.D."/>
            <person name="Quackenbush J."/>
            <person name="Lee N.H."/>
            <person name="Sutton G.G."/>
            <person name="Gill S.R."/>
            <person name="Kirkness E.F."/>
            <person name="Dougherty B.A."/>
            <person name="McKenney K."/>
            <person name="Adams M.D."/>
            <person name="Loftus B.J."/>
            <person name="Peterson S.N."/>
            <person name="Reich C.I."/>
            <person name="McNeil L.K."/>
            <person name="Badger J.H."/>
            <person name="Glodek A."/>
            <person name="Zhou L."/>
            <person name="Overbeek R."/>
            <person name="Gocayne J.D."/>
            <person name="Weidman J.F."/>
            <person name="McDonald L.A."/>
            <person name="Utterback T.R."/>
            <person name="Cotton M.D."/>
            <person name="Spriggs T."/>
            <person name="Artiach P."/>
            <person name="Kaine B.P."/>
            <person name="Sykes S.M."/>
            <person name="Sadow P.W."/>
            <person name="D'Andrea K.P."/>
            <person name="Bowman C."/>
            <person name="Fujii C."/>
            <person name="Garland S.A."/>
            <person name="Mason T.M."/>
            <person name="Olsen G.J."/>
            <person name="Fraser C.M."/>
            <person name="Smith H.O."/>
            <person name="Woese C.R."/>
            <person name="Venter J.C."/>
        </authorList>
    </citation>
    <scope>NUCLEOTIDE SEQUENCE [LARGE SCALE GENOMIC DNA]</scope>
    <source>
        <strain>ATCC 49558 / DSM 4304 / JCM 9628 / NBRC 100126 / VC-16</strain>
    </source>
</reference>
<comment type="subcellular location">
    <subcellularLocation>
        <location evidence="2">Cell membrane</location>
        <topology evidence="2">Multi-pass membrane protein</topology>
    </subcellularLocation>
</comment>
<sequence length="329" mass="37776">MNNFKLIVRKWYIPVLIISLITLVASAYALYWATIPETKETQISIRHYSALAYFSGGAEVKKDNPIWANGSFVTLPVYSYSLTPEYSGEFYFTTAPRGDITIETEAKIVYFYEVSDAPVWEKVYYAASNTSRGEIKTNFKINVTDLKSKINEAQNSFGVYLGKTGARIDVSVHYYGKITGKDVDETLSFKIPIDVQSTYYSFSTLNETRDFEMPSTRVVEVQKPLHMKVIPAALCTVSIIFAGLSVVYRTKYSDVSSLEREIERVSWEKKLKEVSFARMPETNLEMVEVERFEDISKAAEETFEHLFYDREKGVFFFIHGGVLYYCREK</sequence>
<keyword id="KW-1003">Cell membrane</keyword>
<keyword id="KW-0472">Membrane</keyword>
<keyword id="KW-1185">Reference proteome</keyword>
<keyword id="KW-0812">Transmembrane</keyword>
<keyword id="KW-1133">Transmembrane helix</keyword>
<gene>
    <name type="ordered locus">AF_1654</name>
</gene>
<evidence type="ECO:0000255" key="1"/>
<evidence type="ECO:0000305" key="2"/>
<feature type="chain" id="PRO_0000128043" description="Uncharacterized protein AF_1654">
    <location>
        <begin position="1"/>
        <end position="329"/>
    </location>
</feature>
<feature type="transmembrane region" description="Helical" evidence="1">
    <location>
        <begin position="13"/>
        <end position="35"/>
    </location>
</feature>
<feature type="transmembrane region" description="Helical" evidence="1">
    <location>
        <begin position="229"/>
        <end position="248"/>
    </location>
</feature>
<proteinExistence type="predicted"/>
<name>Y1654_ARCFU</name>
<accession>O28619</accession>